<feature type="chain" id="PRO_0000351774" description="Ribosome maturation factor RimM">
    <location>
        <begin position="1"/>
        <end position="173"/>
    </location>
</feature>
<feature type="domain" description="PRC barrel" evidence="1">
    <location>
        <begin position="102"/>
        <end position="173"/>
    </location>
</feature>
<protein>
    <recommendedName>
        <fullName evidence="1">Ribosome maturation factor RimM</fullName>
    </recommendedName>
</protein>
<evidence type="ECO:0000255" key="1">
    <source>
        <dbReference type="HAMAP-Rule" id="MF_00014"/>
    </source>
</evidence>
<evidence type="ECO:0000305" key="2"/>
<accession>Q1GYT7</accession>
<dbReference type="EMBL" id="CP000284">
    <property type="protein sequence ID" value="ABE50600.1"/>
    <property type="status" value="ALT_INIT"/>
    <property type="molecule type" value="Genomic_DNA"/>
</dbReference>
<dbReference type="RefSeq" id="WP_011480553.1">
    <property type="nucleotide sequence ID" value="NC_007947.1"/>
</dbReference>
<dbReference type="SMR" id="Q1GYT7"/>
<dbReference type="STRING" id="265072.Mfla_2333"/>
<dbReference type="KEGG" id="mfa:Mfla_2333"/>
<dbReference type="eggNOG" id="COG0806">
    <property type="taxonomic scope" value="Bacteria"/>
</dbReference>
<dbReference type="HOGENOM" id="CLU_077636_1_0_4"/>
<dbReference type="OrthoDB" id="9783509at2"/>
<dbReference type="Proteomes" id="UP000002440">
    <property type="component" value="Chromosome"/>
</dbReference>
<dbReference type="GO" id="GO:0005737">
    <property type="term" value="C:cytoplasm"/>
    <property type="evidence" value="ECO:0007669"/>
    <property type="project" value="UniProtKB-SubCell"/>
</dbReference>
<dbReference type="GO" id="GO:0005840">
    <property type="term" value="C:ribosome"/>
    <property type="evidence" value="ECO:0007669"/>
    <property type="project" value="InterPro"/>
</dbReference>
<dbReference type="GO" id="GO:0043022">
    <property type="term" value="F:ribosome binding"/>
    <property type="evidence" value="ECO:0007669"/>
    <property type="project" value="InterPro"/>
</dbReference>
<dbReference type="GO" id="GO:0042274">
    <property type="term" value="P:ribosomal small subunit biogenesis"/>
    <property type="evidence" value="ECO:0007669"/>
    <property type="project" value="UniProtKB-UniRule"/>
</dbReference>
<dbReference type="GO" id="GO:0006364">
    <property type="term" value="P:rRNA processing"/>
    <property type="evidence" value="ECO:0007669"/>
    <property type="project" value="UniProtKB-UniRule"/>
</dbReference>
<dbReference type="Gene3D" id="2.30.30.240">
    <property type="entry name" value="PRC-barrel domain"/>
    <property type="match status" value="1"/>
</dbReference>
<dbReference type="Gene3D" id="2.40.30.60">
    <property type="entry name" value="RimM"/>
    <property type="match status" value="1"/>
</dbReference>
<dbReference type="HAMAP" id="MF_00014">
    <property type="entry name" value="Ribosome_mat_RimM"/>
    <property type="match status" value="1"/>
</dbReference>
<dbReference type="InterPro" id="IPR011033">
    <property type="entry name" value="PRC_barrel-like_sf"/>
</dbReference>
<dbReference type="InterPro" id="IPR056792">
    <property type="entry name" value="PRC_RimM"/>
</dbReference>
<dbReference type="InterPro" id="IPR011961">
    <property type="entry name" value="RimM"/>
</dbReference>
<dbReference type="InterPro" id="IPR002676">
    <property type="entry name" value="RimM_N"/>
</dbReference>
<dbReference type="InterPro" id="IPR036976">
    <property type="entry name" value="RimM_N_sf"/>
</dbReference>
<dbReference type="InterPro" id="IPR009000">
    <property type="entry name" value="Transl_B-barrel_sf"/>
</dbReference>
<dbReference type="NCBIfam" id="TIGR02273">
    <property type="entry name" value="16S_RimM"/>
    <property type="match status" value="1"/>
</dbReference>
<dbReference type="PANTHER" id="PTHR33692">
    <property type="entry name" value="RIBOSOME MATURATION FACTOR RIMM"/>
    <property type="match status" value="1"/>
</dbReference>
<dbReference type="PANTHER" id="PTHR33692:SF1">
    <property type="entry name" value="RIBOSOME MATURATION FACTOR RIMM"/>
    <property type="match status" value="1"/>
</dbReference>
<dbReference type="Pfam" id="PF24986">
    <property type="entry name" value="PRC_RimM"/>
    <property type="match status" value="1"/>
</dbReference>
<dbReference type="Pfam" id="PF01782">
    <property type="entry name" value="RimM"/>
    <property type="match status" value="1"/>
</dbReference>
<dbReference type="SUPFAM" id="SSF50346">
    <property type="entry name" value="PRC-barrel domain"/>
    <property type="match status" value="1"/>
</dbReference>
<dbReference type="SUPFAM" id="SSF50447">
    <property type="entry name" value="Translation proteins"/>
    <property type="match status" value="1"/>
</dbReference>
<sequence length="173" mass="19767">MQIVSELVIMGRIVAPYGVYGWVKVQPATEYVDSLFDYGRWMLGRGDPKQPEQWQSCEVEKAKVHNDLLLVKLQGIDDRDQAFSCKGMYVAVYRDELPEPEEGEYYWSDLIGLQVRNQQEVDFGQVVDVFATGANDVLVVKGDRERLVPFIGQVVLEVDTDGKTMLVDWDPEF</sequence>
<proteinExistence type="inferred from homology"/>
<organism>
    <name type="scientific">Methylobacillus flagellatus (strain ATCC 51484 / DSM 6875 / VKM B-1610 / KT)</name>
    <dbReference type="NCBI Taxonomy" id="265072"/>
    <lineage>
        <taxon>Bacteria</taxon>
        <taxon>Pseudomonadati</taxon>
        <taxon>Pseudomonadota</taxon>
        <taxon>Betaproteobacteria</taxon>
        <taxon>Nitrosomonadales</taxon>
        <taxon>Methylophilaceae</taxon>
        <taxon>Methylobacillus</taxon>
    </lineage>
</organism>
<keyword id="KW-0143">Chaperone</keyword>
<keyword id="KW-0963">Cytoplasm</keyword>
<keyword id="KW-1185">Reference proteome</keyword>
<keyword id="KW-0690">Ribosome biogenesis</keyword>
<keyword id="KW-0698">rRNA processing</keyword>
<comment type="function">
    <text evidence="1">An accessory protein needed during the final step in the assembly of 30S ribosomal subunit, possibly for assembly of the head region. Essential for efficient processing of 16S rRNA. May be needed both before and after RbfA during the maturation of 16S rRNA. It has affinity for free ribosomal 30S subunits but not for 70S ribosomes.</text>
</comment>
<comment type="subunit">
    <text evidence="1">Binds ribosomal protein uS19.</text>
</comment>
<comment type="subcellular location">
    <subcellularLocation>
        <location evidence="1">Cytoplasm</location>
    </subcellularLocation>
</comment>
<comment type="domain">
    <text evidence="1">The PRC barrel domain binds ribosomal protein uS19.</text>
</comment>
<comment type="similarity">
    <text evidence="1">Belongs to the RimM family.</text>
</comment>
<comment type="sequence caution" evidence="2">
    <conflict type="erroneous initiation">
        <sequence resource="EMBL-CDS" id="ABE50600"/>
    </conflict>
</comment>
<reference key="1">
    <citation type="submission" date="2006-03" db="EMBL/GenBank/DDBJ databases">
        <title>Complete sequence of Methylobacillus flagellatus KT.</title>
        <authorList>
            <consortium name="US DOE Joint Genome Institute"/>
            <person name="Copeland A."/>
            <person name="Lucas S."/>
            <person name="Lapidus A."/>
            <person name="Barry K."/>
            <person name="Detter J.C."/>
            <person name="Glavina del Rio T."/>
            <person name="Hammon N."/>
            <person name="Israni S."/>
            <person name="Dalin E."/>
            <person name="Tice H."/>
            <person name="Pitluck S."/>
            <person name="Brettin T."/>
            <person name="Bruce D."/>
            <person name="Han C."/>
            <person name="Tapia R."/>
            <person name="Saunders E."/>
            <person name="Gilna P."/>
            <person name="Schmutz J."/>
            <person name="Larimer F."/>
            <person name="Land M."/>
            <person name="Kyrpides N."/>
            <person name="Anderson I."/>
            <person name="Richardson P."/>
        </authorList>
    </citation>
    <scope>NUCLEOTIDE SEQUENCE [LARGE SCALE GENOMIC DNA]</scope>
    <source>
        <strain>ATCC 51484 / DSM 6875 / VKM B-1610 / KT</strain>
    </source>
</reference>
<name>RIMM_METFK</name>
<gene>
    <name evidence="1" type="primary">rimM</name>
    <name type="ordered locus">Mfla_2333</name>
</gene>